<comment type="function">
    <text evidence="1">One of the primary rRNA binding proteins, it binds directly to 16S rRNA where it nucleates assembly of the head domain of the 30S subunit. Is located at the subunit interface close to the decoding center, probably blocks exit of the E-site tRNA.</text>
</comment>
<comment type="subunit">
    <text evidence="1">Part of the 30S ribosomal subunit. Contacts proteins S9 and S11.</text>
</comment>
<comment type="similarity">
    <text evidence="1">Belongs to the universal ribosomal protein uS7 family.</text>
</comment>
<organism>
    <name type="scientific">Acinetobacter baumannii (strain AB307-0294)</name>
    <dbReference type="NCBI Taxonomy" id="557600"/>
    <lineage>
        <taxon>Bacteria</taxon>
        <taxon>Pseudomonadati</taxon>
        <taxon>Pseudomonadota</taxon>
        <taxon>Gammaproteobacteria</taxon>
        <taxon>Moraxellales</taxon>
        <taxon>Moraxellaceae</taxon>
        <taxon>Acinetobacter</taxon>
        <taxon>Acinetobacter calcoaceticus/baumannii complex</taxon>
    </lineage>
</organism>
<evidence type="ECO:0000255" key="1">
    <source>
        <dbReference type="HAMAP-Rule" id="MF_00480"/>
    </source>
</evidence>
<evidence type="ECO:0000305" key="2"/>
<name>RS7_ACIB3</name>
<keyword id="KW-0687">Ribonucleoprotein</keyword>
<keyword id="KW-0689">Ribosomal protein</keyword>
<keyword id="KW-0694">RNA-binding</keyword>
<keyword id="KW-0699">rRNA-binding</keyword>
<keyword id="KW-0820">tRNA-binding</keyword>
<reference key="1">
    <citation type="journal article" date="2008" name="J. Bacteriol.">
        <title>Comparative genome sequence analysis of multidrug-resistant Acinetobacter baumannii.</title>
        <authorList>
            <person name="Adams M.D."/>
            <person name="Goglin K."/>
            <person name="Molyneaux N."/>
            <person name="Hujer K.M."/>
            <person name="Lavender H."/>
            <person name="Jamison J.J."/>
            <person name="MacDonald I.J."/>
            <person name="Martin K.M."/>
            <person name="Russo T."/>
            <person name="Campagnari A.A."/>
            <person name="Hujer A.M."/>
            <person name="Bonomo R.A."/>
            <person name="Gill S.R."/>
        </authorList>
    </citation>
    <scope>NUCLEOTIDE SEQUENCE [LARGE SCALE GENOMIC DNA]</scope>
    <source>
        <strain>AB307-0294</strain>
    </source>
</reference>
<gene>
    <name evidence="1" type="primary">rpsG</name>
    <name type="ordered locus">ABBFA_002748</name>
</gene>
<accession>B7GYM9</accession>
<feature type="chain" id="PRO_1000125877" description="Small ribosomal subunit protein uS7">
    <location>
        <begin position="1"/>
        <end position="156"/>
    </location>
</feature>
<proteinExistence type="inferred from homology"/>
<dbReference type="EMBL" id="CP001172">
    <property type="protein sequence ID" value="ACJ57678.1"/>
    <property type="molecule type" value="Genomic_DNA"/>
</dbReference>
<dbReference type="RefSeq" id="WP_001138055.1">
    <property type="nucleotide sequence ID" value="NZ_CP001172.1"/>
</dbReference>
<dbReference type="SMR" id="B7GYM9"/>
<dbReference type="GeneID" id="92892796"/>
<dbReference type="HOGENOM" id="CLU_072226_1_1_6"/>
<dbReference type="Proteomes" id="UP000006924">
    <property type="component" value="Chromosome"/>
</dbReference>
<dbReference type="GO" id="GO:0015935">
    <property type="term" value="C:small ribosomal subunit"/>
    <property type="evidence" value="ECO:0007669"/>
    <property type="project" value="InterPro"/>
</dbReference>
<dbReference type="GO" id="GO:0019843">
    <property type="term" value="F:rRNA binding"/>
    <property type="evidence" value="ECO:0007669"/>
    <property type="project" value="UniProtKB-UniRule"/>
</dbReference>
<dbReference type="GO" id="GO:0003735">
    <property type="term" value="F:structural constituent of ribosome"/>
    <property type="evidence" value="ECO:0007669"/>
    <property type="project" value="InterPro"/>
</dbReference>
<dbReference type="GO" id="GO:0000049">
    <property type="term" value="F:tRNA binding"/>
    <property type="evidence" value="ECO:0007669"/>
    <property type="project" value="UniProtKB-UniRule"/>
</dbReference>
<dbReference type="GO" id="GO:0006412">
    <property type="term" value="P:translation"/>
    <property type="evidence" value="ECO:0007669"/>
    <property type="project" value="UniProtKB-UniRule"/>
</dbReference>
<dbReference type="CDD" id="cd14869">
    <property type="entry name" value="uS7_Bacteria"/>
    <property type="match status" value="1"/>
</dbReference>
<dbReference type="FunFam" id="1.10.455.10:FF:000001">
    <property type="entry name" value="30S ribosomal protein S7"/>
    <property type="match status" value="1"/>
</dbReference>
<dbReference type="Gene3D" id="1.10.455.10">
    <property type="entry name" value="Ribosomal protein S7 domain"/>
    <property type="match status" value="1"/>
</dbReference>
<dbReference type="HAMAP" id="MF_00480_B">
    <property type="entry name" value="Ribosomal_uS7_B"/>
    <property type="match status" value="1"/>
</dbReference>
<dbReference type="InterPro" id="IPR000235">
    <property type="entry name" value="Ribosomal_uS7"/>
</dbReference>
<dbReference type="InterPro" id="IPR005717">
    <property type="entry name" value="Ribosomal_uS7_bac/org-type"/>
</dbReference>
<dbReference type="InterPro" id="IPR020606">
    <property type="entry name" value="Ribosomal_uS7_CS"/>
</dbReference>
<dbReference type="InterPro" id="IPR023798">
    <property type="entry name" value="Ribosomal_uS7_dom"/>
</dbReference>
<dbReference type="InterPro" id="IPR036823">
    <property type="entry name" value="Ribosomal_uS7_dom_sf"/>
</dbReference>
<dbReference type="NCBIfam" id="TIGR01029">
    <property type="entry name" value="rpsG_bact"/>
    <property type="match status" value="1"/>
</dbReference>
<dbReference type="PANTHER" id="PTHR11205">
    <property type="entry name" value="RIBOSOMAL PROTEIN S7"/>
    <property type="match status" value="1"/>
</dbReference>
<dbReference type="Pfam" id="PF00177">
    <property type="entry name" value="Ribosomal_S7"/>
    <property type="match status" value="1"/>
</dbReference>
<dbReference type="PIRSF" id="PIRSF002122">
    <property type="entry name" value="RPS7p_RPS7a_RPS5e_RPS7o"/>
    <property type="match status" value="1"/>
</dbReference>
<dbReference type="SUPFAM" id="SSF47973">
    <property type="entry name" value="Ribosomal protein S7"/>
    <property type="match status" value="1"/>
</dbReference>
<dbReference type="PROSITE" id="PS00052">
    <property type="entry name" value="RIBOSOMAL_S7"/>
    <property type="match status" value="1"/>
</dbReference>
<sequence>MPRRRVVAAREILPDPKFSSQTIAKFMNHVMQDGKKSIAESIVYGALERVQEKNKVDPVEFFETTLEKVRPMVEVKARRVGGATYQVPMEVRPSRRTALAMRWLVDAAAKRSEKTMALRLAGELLDAAEGKGAAIKKREDVHRMAEANKAFSHYRF</sequence>
<protein>
    <recommendedName>
        <fullName evidence="1">Small ribosomal subunit protein uS7</fullName>
    </recommendedName>
    <alternativeName>
        <fullName evidence="2">30S ribosomal protein S7</fullName>
    </alternativeName>
</protein>